<gene>
    <name type="primary">ERG3</name>
    <name type="ordered locus">Os04g0531100</name>
    <name type="ordered locus">LOC_Os04g44870</name>
    <name type="ORF">OsJ_014914</name>
    <name type="ORF">OSJNBa0081C01.13</name>
</gene>
<feature type="chain" id="PRO_0000087026" description="Elicitor-responsive protein 3">
    <location>
        <begin position="1"/>
        <end position="144"/>
    </location>
</feature>
<feature type="domain" description="C2" evidence="1">
    <location>
        <begin position="1"/>
        <end position="103"/>
    </location>
</feature>
<feature type="region of interest" description="Disordered" evidence="2">
    <location>
        <begin position="123"/>
        <end position="144"/>
    </location>
</feature>
<feature type="binding site" evidence="1">
    <location>
        <position position="20"/>
    </location>
    <ligand>
        <name>Ca(2+)</name>
        <dbReference type="ChEBI" id="CHEBI:29108"/>
        <label>1</label>
    </ligand>
</feature>
<feature type="binding site" evidence="1">
    <location>
        <position position="20"/>
    </location>
    <ligand>
        <name>Ca(2+)</name>
        <dbReference type="ChEBI" id="CHEBI:29108"/>
        <label>2</label>
    </ligand>
</feature>
<feature type="binding site" evidence="1">
    <location>
        <position position="26"/>
    </location>
    <ligand>
        <name>Ca(2+)</name>
        <dbReference type="ChEBI" id="CHEBI:29108"/>
        <label>1</label>
    </ligand>
</feature>
<feature type="binding site" evidence="1">
    <location>
        <position position="73"/>
    </location>
    <ligand>
        <name>Ca(2+)</name>
        <dbReference type="ChEBI" id="CHEBI:29108"/>
        <label>1</label>
    </ligand>
</feature>
<feature type="binding site" evidence="1">
    <location>
        <position position="73"/>
    </location>
    <ligand>
        <name>Ca(2+)</name>
        <dbReference type="ChEBI" id="CHEBI:29108"/>
        <label>2</label>
    </ligand>
</feature>
<feature type="binding site" evidence="1">
    <location>
        <position position="75"/>
    </location>
    <ligand>
        <name>Ca(2+)</name>
        <dbReference type="ChEBI" id="CHEBI:29108"/>
        <label>1</label>
    </ligand>
</feature>
<feature type="binding site" evidence="1">
    <location>
        <position position="75"/>
    </location>
    <ligand>
        <name>Ca(2+)</name>
        <dbReference type="ChEBI" id="CHEBI:29108"/>
        <label>2</label>
    </ligand>
</feature>
<feature type="binding site" evidence="1">
    <location>
        <position position="81"/>
    </location>
    <ligand>
        <name>Ca(2+)</name>
        <dbReference type="ChEBI" id="CHEBI:29108"/>
        <label>2</label>
    </ligand>
</feature>
<feature type="modified residue" description="Phosphoserine; by CPK" evidence="7">
    <location>
        <position position="40"/>
    </location>
</feature>
<organism>
    <name type="scientific">Oryza sativa subsp. japonica</name>
    <name type="common">Rice</name>
    <dbReference type="NCBI Taxonomy" id="39947"/>
    <lineage>
        <taxon>Eukaryota</taxon>
        <taxon>Viridiplantae</taxon>
        <taxon>Streptophyta</taxon>
        <taxon>Embryophyta</taxon>
        <taxon>Tracheophyta</taxon>
        <taxon>Spermatophyta</taxon>
        <taxon>Magnoliopsida</taxon>
        <taxon>Liliopsida</taxon>
        <taxon>Poales</taxon>
        <taxon>Poaceae</taxon>
        <taxon>BOP clade</taxon>
        <taxon>Oryzoideae</taxon>
        <taxon>Oryzeae</taxon>
        <taxon>Oryzinae</taxon>
        <taxon>Oryza</taxon>
        <taxon>Oryza sativa</taxon>
    </lineage>
</organism>
<name>ERG3_ORYSJ</name>
<evidence type="ECO:0000255" key="1">
    <source>
        <dbReference type="PROSITE-ProRule" id="PRU00041"/>
    </source>
</evidence>
<evidence type="ECO:0000256" key="2">
    <source>
        <dbReference type="SAM" id="MobiDB-lite"/>
    </source>
</evidence>
<evidence type="ECO:0000269" key="3">
    <source>
    </source>
</evidence>
<evidence type="ECO:0000269" key="4">
    <source>
    </source>
</evidence>
<evidence type="ECO:0000303" key="5">
    <source>
    </source>
</evidence>
<evidence type="ECO:0000305" key="6">
    <source>
    </source>
</evidence>
<evidence type="ECO:0000305" key="7">
    <source>
    </source>
</evidence>
<reference key="1">
    <citation type="journal article" date="2002" name="Plant Cell Physiol.">
        <title>Rpp16 and Rpp17, from a common origin, have different protein characteristics but both genes are predominantly expressed in rice phloem tissues.</title>
        <authorList>
            <person name="Asano T."/>
            <person name="Kusano H."/>
            <person name="Okuda T."/>
            <person name="Kubo N."/>
            <person name="Shimada H."/>
            <person name="Kadowaki K."/>
        </authorList>
    </citation>
    <scope>NUCLEOTIDE SEQUENCE [GENOMIC DNA]</scope>
    <scope>TISSUE SPECIFICITY</scope>
    <source>
        <strain>cv. Nipponbare</strain>
        <tissue>Phloem</tissue>
    </source>
</reference>
<reference key="2">
    <citation type="journal article" date="2002" name="Nature">
        <title>Sequence and analysis of rice chromosome 4.</title>
        <authorList>
            <person name="Feng Q."/>
            <person name="Zhang Y."/>
            <person name="Hao P."/>
            <person name="Wang S."/>
            <person name="Fu G."/>
            <person name="Huang Y."/>
            <person name="Li Y."/>
            <person name="Zhu J."/>
            <person name="Liu Y."/>
            <person name="Hu X."/>
            <person name="Jia P."/>
            <person name="Zhang Y."/>
            <person name="Zhao Q."/>
            <person name="Ying K."/>
            <person name="Yu S."/>
            <person name="Tang Y."/>
            <person name="Weng Q."/>
            <person name="Zhang L."/>
            <person name="Lu Y."/>
            <person name="Mu J."/>
            <person name="Lu Y."/>
            <person name="Zhang L.S."/>
            <person name="Yu Z."/>
            <person name="Fan D."/>
            <person name="Liu X."/>
            <person name="Lu T."/>
            <person name="Li C."/>
            <person name="Wu Y."/>
            <person name="Sun T."/>
            <person name="Lei H."/>
            <person name="Li T."/>
            <person name="Hu H."/>
            <person name="Guan J."/>
            <person name="Wu M."/>
            <person name="Zhang R."/>
            <person name="Zhou B."/>
            <person name="Chen Z."/>
            <person name="Chen L."/>
            <person name="Jin Z."/>
            <person name="Wang R."/>
            <person name="Yin H."/>
            <person name="Cai Z."/>
            <person name="Ren S."/>
            <person name="Lv G."/>
            <person name="Gu W."/>
            <person name="Zhu G."/>
            <person name="Tu Y."/>
            <person name="Jia J."/>
            <person name="Zhang Y."/>
            <person name="Chen J."/>
            <person name="Kang H."/>
            <person name="Chen X."/>
            <person name="Shao C."/>
            <person name="Sun Y."/>
            <person name="Hu Q."/>
            <person name="Zhang X."/>
            <person name="Zhang W."/>
            <person name="Wang L."/>
            <person name="Ding C."/>
            <person name="Sheng H."/>
            <person name="Gu J."/>
            <person name="Chen S."/>
            <person name="Ni L."/>
            <person name="Zhu F."/>
            <person name="Chen W."/>
            <person name="Lan L."/>
            <person name="Lai Y."/>
            <person name="Cheng Z."/>
            <person name="Gu M."/>
            <person name="Jiang J."/>
            <person name="Li J."/>
            <person name="Hong G."/>
            <person name="Xue Y."/>
            <person name="Han B."/>
        </authorList>
    </citation>
    <scope>NUCLEOTIDE SEQUENCE [LARGE SCALE GENOMIC DNA]</scope>
    <source>
        <strain>cv. Nipponbare</strain>
    </source>
</reference>
<reference key="3">
    <citation type="journal article" date="2005" name="Nature">
        <title>The map-based sequence of the rice genome.</title>
        <authorList>
            <consortium name="International rice genome sequencing project (IRGSP)"/>
        </authorList>
    </citation>
    <scope>NUCLEOTIDE SEQUENCE [LARGE SCALE GENOMIC DNA]</scope>
    <source>
        <strain>cv. Nipponbare</strain>
    </source>
</reference>
<reference key="4">
    <citation type="journal article" date="2008" name="Nucleic Acids Res.">
        <title>The rice annotation project database (RAP-DB): 2008 update.</title>
        <authorList>
            <consortium name="The rice annotation project (RAP)"/>
        </authorList>
    </citation>
    <scope>GENOME REANNOTATION</scope>
    <source>
        <strain>cv. Nipponbare</strain>
    </source>
</reference>
<reference key="5">
    <citation type="journal article" date="2013" name="Rice">
        <title>Improvement of the Oryza sativa Nipponbare reference genome using next generation sequence and optical map data.</title>
        <authorList>
            <person name="Kawahara Y."/>
            <person name="de la Bastide M."/>
            <person name="Hamilton J.P."/>
            <person name="Kanamori H."/>
            <person name="McCombie W.R."/>
            <person name="Ouyang S."/>
            <person name="Schwartz D.C."/>
            <person name="Tanaka T."/>
            <person name="Wu J."/>
            <person name="Zhou S."/>
            <person name="Childs K.L."/>
            <person name="Davidson R.M."/>
            <person name="Lin H."/>
            <person name="Quesada-Ocampo L."/>
            <person name="Vaillancourt B."/>
            <person name="Sakai H."/>
            <person name="Lee S.S."/>
            <person name="Kim J."/>
            <person name="Numa H."/>
            <person name="Itoh T."/>
            <person name="Buell C.R."/>
            <person name="Matsumoto T."/>
        </authorList>
    </citation>
    <scope>GENOME REANNOTATION</scope>
    <source>
        <strain>cv. Nipponbare</strain>
    </source>
</reference>
<reference key="6">
    <citation type="journal article" date="2005" name="PLoS Biol.">
        <title>The genomes of Oryza sativa: a history of duplications.</title>
        <authorList>
            <person name="Yu J."/>
            <person name="Wang J."/>
            <person name="Lin W."/>
            <person name="Li S."/>
            <person name="Li H."/>
            <person name="Zhou J."/>
            <person name="Ni P."/>
            <person name="Dong W."/>
            <person name="Hu S."/>
            <person name="Zeng C."/>
            <person name="Zhang J."/>
            <person name="Zhang Y."/>
            <person name="Li R."/>
            <person name="Xu Z."/>
            <person name="Li S."/>
            <person name="Li X."/>
            <person name="Zheng H."/>
            <person name="Cong L."/>
            <person name="Lin L."/>
            <person name="Yin J."/>
            <person name="Geng J."/>
            <person name="Li G."/>
            <person name="Shi J."/>
            <person name="Liu J."/>
            <person name="Lv H."/>
            <person name="Li J."/>
            <person name="Wang J."/>
            <person name="Deng Y."/>
            <person name="Ran L."/>
            <person name="Shi X."/>
            <person name="Wang X."/>
            <person name="Wu Q."/>
            <person name="Li C."/>
            <person name="Ren X."/>
            <person name="Wang J."/>
            <person name="Wang X."/>
            <person name="Li D."/>
            <person name="Liu D."/>
            <person name="Zhang X."/>
            <person name="Ji Z."/>
            <person name="Zhao W."/>
            <person name="Sun Y."/>
            <person name="Zhang Z."/>
            <person name="Bao J."/>
            <person name="Han Y."/>
            <person name="Dong L."/>
            <person name="Ji J."/>
            <person name="Chen P."/>
            <person name="Wu S."/>
            <person name="Liu J."/>
            <person name="Xiao Y."/>
            <person name="Bu D."/>
            <person name="Tan J."/>
            <person name="Yang L."/>
            <person name="Ye C."/>
            <person name="Zhang J."/>
            <person name="Xu J."/>
            <person name="Zhou Y."/>
            <person name="Yu Y."/>
            <person name="Zhang B."/>
            <person name="Zhuang S."/>
            <person name="Wei H."/>
            <person name="Liu B."/>
            <person name="Lei M."/>
            <person name="Yu H."/>
            <person name="Li Y."/>
            <person name="Xu H."/>
            <person name="Wei S."/>
            <person name="He X."/>
            <person name="Fang L."/>
            <person name="Zhang Z."/>
            <person name="Zhang Y."/>
            <person name="Huang X."/>
            <person name="Su Z."/>
            <person name="Tong W."/>
            <person name="Li J."/>
            <person name="Tong Z."/>
            <person name="Li S."/>
            <person name="Ye J."/>
            <person name="Wang L."/>
            <person name="Fang L."/>
            <person name="Lei T."/>
            <person name="Chen C.-S."/>
            <person name="Chen H.-C."/>
            <person name="Xu Z."/>
            <person name="Li H."/>
            <person name="Huang H."/>
            <person name="Zhang F."/>
            <person name="Xu H."/>
            <person name="Li N."/>
            <person name="Zhao C."/>
            <person name="Li S."/>
            <person name="Dong L."/>
            <person name="Huang Y."/>
            <person name="Li L."/>
            <person name="Xi Y."/>
            <person name="Qi Q."/>
            <person name="Li W."/>
            <person name="Zhang B."/>
            <person name="Hu W."/>
            <person name="Zhang Y."/>
            <person name="Tian X."/>
            <person name="Jiao Y."/>
            <person name="Liang X."/>
            <person name="Jin J."/>
            <person name="Gao L."/>
            <person name="Zheng W."/>
            <person name="Hao B."/>
            <person name="Liu S.-M."/>
            <person name="Wang W."/>
            <person name="Yuan L."/>
            <person name="Cao M."/>
            <person name="McDermott J."/>
            <person name="Samudrala R."/>
            <person name="Wang J."/>
            <person name="Wong G.K.-S."/>
            <person name="Yang H."/>
        </authorList>
    </citation>
    <scope>NUCLEOTIDE SEQUENCE [LARGE SCALE GENOMIC DNA]</scope>
    <source>
        <strain>cv. Nipponbare</strain>
    </source>
</reference>
<reference key="7">
    <citation type="journal article" date="2003" name="Science">
        <title>Collection, mapping, and annotation of over 28,000 cDNA clones from japonica rice.</title>
        <authorList>
            <consortium name="The rice full-length cDNA consortium"/>
        </authorList>
    </citation>
    <scope>NUCLEOTIDE SEQUENCE [LARGE SCALE MRNA]</scope>
    <source>
        <strain>cv. Nipponbare</strain>
    </source>
</reference>
<reference key="8">
    <citation type="journal article" date="2011" name="Biochim. Biophys. Acta">
        <title>Rice OsERG3 encodes an unusual small C2-domain protein containing a Ca(2+)-binding module but lacking phospholipid-binding properties.</title>
        <authorList>
            <person name="Kang C.H."/>
            <person name="Moon B.C."/>
            <person name="Park H.C."/>
            <person name="Koo S.C."/>
            <person name="Jeon J.M."/>
            <person name="Cheong Y.H."/>
            <person name="Chung W.S."/>
            <person name="Lim C.O."/>
            <person name="Kim J.Y."/>
            <person name="Yoon B.D."/>
            <person name="Lee S.Y."/>
            <person name="Kim C.Y."/>
        </authorList>
    </citation>
    <scope>FUNCTION</scope>
    <scope>SUBCELLULAR LOCATION</scope>
    <scope>INDUCTION</scope>
</reference>
<reference key="9">
    <citation type="journal article" date="2013" name="Mol. Cells">
        <title>Rice small C2-domain proteins are phosphorylated by calcium-dependent protein kinase.</title>
        <authorList>
            <person name="Kang C.H."/>
            <person name="Moon B.C."/>
            <person name="Park H.C."/>
            <person name="Koo S.C."/>
            <person name="Chi Y.H."/>
            <person name="Cheong Y.H."/>
            <person name="Yoon B.D."/>
            <person name="Lee S.Y."/>
            <person name="Kim C.Y."/>
        </authorList>
    </citation>
    <scope>PHOSPHORYLATION AT SER-40</scope>
</reference>
<accession>Q0JBH9</accession>
<accession>B7E8T2</accession>
<accession>O82550</accession>
<accession>Q7F9X0</accession>
<comment type="function">
    <text evidence="4 6">May play a role in plant defense signaling (Probable). Does not bind to phospholipids in a Ca(2+)-dependent manner in vitro (PubMed:21756975).</text>
</comment>
<comment type="cofactor">
    <cofactor evidence="1">
        <name>Ca(2+)</name>
        <dbReference type="ChEBI" id="CHEBI:29108"/>
    </cofactor>
</comment>
<comment type="subcellular location">
    <subcellularLocation>
        <location evidence="4">Cytoplasm</location>
    </subcellularLocation>
    <text evidence="4">Does not translocate to plasma membrane upon fungal elicitor or calcium treatment.</text>
</comment>
<comment type="tissue specificity">
    <text evidence="3">Expressed in phloem.</text>
</comment>
<comment type="induction">
    <text evidence="4">By fungal elicitor and calcium.</text>
</comment>
<comment type="PTM">
    <text evidence="7">Phosphorylated at Ser-40 by CPK18 in a calcium-dependent manner.</text>
</comment>
<keyword id="KW-0106">Calcium</keyword>
<keyword id="KW-0963">Cytoplasm</keyword>
<keyword id="KW-0479">Metal-binding</keyword>
<keyword id="KW-0597">Phosphoprotein</keyword>
<keyword id="KW-0611">Plant defense</keyword>
<keyword id="KW-1185">Reference proteome</keyword>
<protein>
    <recommendedName>
        <fullName>Elicitor-responsive protein 3</fullName>
        <shortName evidence="5">OsERG3</shortName>
    </recommendedName>
    <alternativeName>
        <fullName>16 kDa phloem protein</fullName>
    </alternativeName>
    <alternativeName>
        <fullName>RPP16</fullName>
    </alternativeName>
</protein>
<proteinExistence type="evidence at protein level"/>
<sequence length="144" mass="15869">MVQGTLEVLLVGAKGLENTDYLCNMDPYAVLKCRSQEQKSSVASGKGSDPEWNETFMFSVTHNATELIIKLMDSDSGTDDDFVGEATISLEAIYTEGSIPPTVYNVVKEEEYRGEIKVGLTFTPEDDRDRGLSEEDIGGWKQSS</sequence>
<dbReference type="EMBL" id="AB060729">
    <property type="protein sequence ID" value="BAC06444.1"/>
    <property type="molecule type" value="Genomic_DNA"/>
</dbReference>
<dbReference type="EMBL" id="AL662984">
    <property type="protein sequence ID" value="CAE03867.2"/>
    <property type="molecule type" value="Genomic_DNA"/>
</dbReference>
<dbReference type="EMBL" id="AP008210">
    <property type="protein sequence ID" value="BAF15308.1"/>
    <property type="molecule type" value="Genomic_DNA"/>
</dbReference>
<dbReference type="EMBL" id="AP014960">
    <property type="protein sequence ID" value="BAS90213.1"/>
    <property type="molecule type" value="Genomic_DNA"/>
</dbReference>
<dbReference type="EMBL" id="CM000141">
    <property type="protein sequence ID" value="EAZ31431.1"/>
    <property type="molecule type" value="Genomic_DNA"/>
</dbReference>
<dbReference type="EMBL" id="AK063584">
    <property type="protein sequence ID" value="BAG88779.1"/>
    <property type="molecule type" value="mRNA"/>
</dbReference>
<dbReference type="RefSeq" id="XP_015637255.1">
    <property type="nucleotide sequence ID" value="XM_015781769.1"/>
</dbReference>
<dbReference type="SMR" id="Q0JBH9"/>
<dbReference type="FunCoup" id="Q0JBH9">
    <property type="interactions" value="45"/>
</dbReference>
<dbReference type="IntAct" id="Q0JBH9">
    <property type="interactions" value="13"/>
</dbReference>
<dbReference type="STRING" id="39947.Q0JBH9"/>
<dbReference type="iPTMnet" id="Q0JBH9"/>
<dbReference type="PaxDb" id="39947-Q0JBH9"/>
<dbReference type="EnsemblPlants" id="Os04t0531100-01">
    <property type="protein sequence ID" value="Os04t0531100-01"/>
    <property type="gene ID" value="Os04g0531100"/>
</dbReference>
<dbReference type="Gramene" id="Os04t0531100-01">
    <property type="protein sequence ID" value="Os04t0531100-01"/>
    <property type="gene ID" value="Os04g0531100"/>
</dbReference>
<dbReference type="KEGG" id="dosa:Os04g0531100"/>
<dbReference type="eggNOG" id="KOG1030">
    <property type="taxonomic scope" value="Eukaryota"/>
</dbReference>
<dbReference type="HOGENOM" id="CLU_109145_1_1_1"/>
<dbReference type="InParanoid" id="Q0JBH9"/>
<dbReference type="OMA" id="GWKQSSF"/>
<dbReference type="OrthoDB" id="419768at2759"/>
<dbReference type="Proteomes" id="UP000000763">
    <property type="component" value="Chromosome 4"/>
</dbReference>
<dbReference type="Proteomes" id="UP000007752">
    <property type="component" value="Chromosome 4"/>
</dbReference>
<dbReference type="Proteomes" id="UP000059680">
    <property type="component" value="Chromosome 4"/>
</dbReference>
<dbReference type="GO" id="GO:0005737">
    <property type="term" value="C:cytoplasm"/>
    <property type="evidence" value="ECO:0000314"/>
    <property type="project" value="UniProtKB"/>
</dbReference>
<dbReference type="GO" id="GO:0046872">
    <property type="term" value="F:metal ion binding"/>
    <property type="evidence" value="ECO:0007669"/>
    <property type="project" value="UniProtKB-KW"/>
</dbReference>
<dbReference type="GO" id="GO:0006952">
    <property type="term" value="P:defense response"/>
    <property type="evidence" value="ECO:0007669"/>
    <property type="project" value="UniProtKB-KW"/>
</dbReference>
<dbReference type="FunFam" id="2.60.40.150:FF:000270">
    <property type="entry name" value="Elicitor-responsive protein 3"/>
    <property type="match status" value="1"/>
</dbReference>
<dbReference type="Gene3D" id="2.60.40.150">
    <property type="entry name" value="C2 domain"/>
    <property type="match status" value="1"/>
</dbReference>
<dbReference type="InterPro" id="IPR000008">
    <property type="entry name" value="C2_dom"/>
</dbReference>
<dbReference type="InterPro" id="IPR035892">
    <property type="entry name" value="C2_domain_sf"/>
</dbReference>
<dbReference type="PANTHER" id="PTHR46502:SF2">
    <property type="entry name" value="16 KDA PHLOEM PROTEIN 2"/>
    <property type="match status" value="1"/>
</dbReference>
<dbReference type="PANTHER" id="PTHR46502">
    <property type="entry name" value="C2 DOMAIN-CONTAINING"/>
    <property type="match status" value="1"/>
</dbReference>
<dbReference type="Pfam" id="PF00168">
    <property type="entry name" value="C2"/>
    <property type="match status" value="1"/>
</dbReference>
<dbReference type="SMART" id="SM00239">
    <property type="entry name" value="C2"/>
    <property type="match status" value="1"/>
</dbReference>
<dbReference type="SUPFAM" id="SSF49562">
    <property type="entry name" value="C2 domain (Calcium/lipid-binding domain, CaLB)"/>
    <property type="match status" value="1"/>
</dbReference>
<dbReference type="PROSITE" id="PS50004">
    <property type="entry name" value="C2"/>
    <property type="match status" value="1"/>
</dbReference>